<sequence length="358" mass="39203">MTEHFDARGTRDAQTGRDLHSFIAGLPKAELHVHHVGSASPRIVSELAARHPDSSVPTDPEALADYFTFTDFAHFIKVYLSVVDLIRTPEDVRLLTYEVARELARQQVRYAELTITPFSSTRRGIDERAFMDAIEDARKSAEAEFGTVLRWCFDIPGEAGLESAEETVRLATDDRLRPEGLVSFGLGGPEIGVPRPQFKPYFDRAIAAGLRSVPHAGETTGPETVWDALTDLRAERIGHGTSSAQDPKLLAHLAEHRIPLEVCPTSNIATRAVRTLDEHPVKEFVRAGVVVTINSDDPPMFGTDLNNEYAIAARLLDLDERGLAGLAKNSVEASFLDAAGKARIAAEIDTYTAAWLAP</sequence>
<dbReference type="EC" id="3.5.4.40"/>
<dbReference type="EMBL" id="BA000030">
    <property type="protein sequence ID" value="BAC70306.1"/>
    <property type="molecule type" value="Genomic_DNA"/>
</dbReference>
<dbReference type="SMR" id="Q82K09"/>
<dbReference type="DNASU" id="1210477"/>
<dbReference type="KEGG" id="sma:SAVERM_2595"/>
<dbReference type="eggNOG" id="COG1816">
    <property type="taxonomic scope" value="Bacteria"/>
</dbReference>
<dbReference type="HOGENOM" id="CLU_039228_7_1_11"/>
<dbReference type="OrthoDB" id="105475at2"/>
<dbReference type="BRENDA" id="3.5.4.40">
    <property type="organism ID" value="5980"/>
</dbReference>
<dbReference type="UniPathway" id="UPA00079"/>
<dbReference type="Proteomes" id="UP000000428">
    <property type="component" value="Chromosome"/>
</dbReference>
<dbReference type="GO" id="GO:0019239">
    <property type="term" value="F:deaminase activity"/>
    <property type="evidence" value="ECO:0007669"/>
    <property type="project" value="InterPro"/>
</dbReference>
<dbReference type="GO" id="GO:0016814">
    <property type="term" value="F:hydrolase activity, acting on carbon-nitrogen (but not peptide) bonds, in cyclic amidines"/>
    <property type="evidence" value="ECO:0007669"/>
    <property type="project" value="UniProtKB-ARBA"/>
</dbReference>
<dbReference type="GO" id="GO:0046872">
    <property type="term" value="F:metal ion binding"/>
    <property type="evidence" value="ECO:0007669"/>
    <property type="project" value="UniProtKB-KW"/>
</dbReference>
<dbReference type="GO" id="GO:0009234">
    <property type="term" value="P:menaquinone biosynthetic process"/>
    <property type="evidence" value="ECO:0007669"/>
    <property type="project" value="UniProtKB-UniPathway"/>
</dbReference>
<dbReference type="CDD" id="cd01320">
    <property type="entry name" value="ADA"/>
    <property type="match status" value="1"/>
</dbReference>
<dbReference type="FunFam" id="3.20.20.140:FF:000090">
    <property type="entry name" value="Adenosine deaminase"/>
    <property type="match status" value="1"/>
</dbReference>
<dbReference type="Gene3D" id="3.20.20.140">
    <property type="entry name" value="Metal-dependent hydrolases"/>
    <property type="match status" value="1"/>
</dbReference>
<dbReference type="InterPro" id="IPR001365">
    <property type="entry name" value="A_deaminase_dom"/>
</dbReference>
<dbReference type="InterPro" id="IPR006330">
    <property type="entry name" value="Ado/ade_deaminase"/>
</dbReference>
<dbReference type="InterPro" id="IPR032466">
    <property type="entry name" value="Metal_Hydrolase"/>
</dbReference>
<dbReference type="NCBIfam" id="TIGR01430">
    <property type="entry name" value="aden_deam"/>
    <property type="match status" value="1"/>
</dbReference>
<dbReference type="NCBIfam" id="NF006854">
    <property type="entry name" value="PRK09358.3-1"/>
    <property type="match status" value="1"/>
</dbReference>
<dbReference type="PANTHER" id="PTHR43114">
    <property type="entry name" value="ADENINE DEAMINASE"/>
    <property type="match status" value="1"/>
</dbReference>
<dbReference type="PANTHER" id="PTHR43114:SF6">
    <property type="entry name" value="ADENINE DEAMINASE"/>
    <property type="match status" value="1"/>
</dbReference>
<dbReference type="Pfam" id="PF00962">
    <property type="entry name" value="A_deaminase"/>
    <property type="match status" value="1"/>
</dbReference>
<dbReference type="SUPFAM" id="SSF51556">
    <property type="entry name" value="Metallo-dependent hydrolases"/>
    <property type="match status" value="1"/>
</dbReference>
<protein>
    <recommendedName>
        <fullName>Aminodeoxyfutalosine deaminase</fullName>
        <shortName>AFL deaminase</shortName>
        <shortName>Aminofutalosine deaminase</shortName>
        <ecNumber>3.5.4.40</ecNumber>
    </recommendedName>
</protein>
<name>MQNX_STRAW</name>
<proteinExistence type="evidence at protein level"/>
<reference key="1">
    <citation type="journal article" date="2001" name="Proc. Natl. Acad. Sci. U.S.A.">
        <title>Genome sequence of an industrial microorganism Streptomyces avermitilis: deducing the ability of producing secondary metabolites.</title>
        <authorList>
            <person name="Omura S."/>
            <person name="Ikeda H."/>
            <person name="Ishikawa J."/>
            <person name="Hanamoto A."/>
            <person name="Takahashi C."/>
            <person name="Shinose M."/>
            <person name="Takahashi Y."/>
            <person name="Horikawa H."/>
            <person name="Nakazawa H."/>
            <person name="Osonoe T."/>
            <person name="Kikuchi H."/>
            <person name="Shiba T."/>
            <person name="Sakaki Y."/>
            <person name="Hattori M."/>
        </authorList>
    </citation>
    <scope>NUCLEOTIDE SEQUENCE [LARGE SCALE GENOMIC DNA]</scope>
    <source>
        <strain>ATCC 31267 / DSM 46492 / JCM 5070 / NBRC 14893 / NCIMB 12804 / NRRL 8165 / MA-4680</strain>
    </source>
</reference>
<reference key="2">
    <citation type="journal article" date="2003" name="Nat. Biotechnol.">
        <title>Complete genome sequence and comparative analysis of the industrial microorganism Streptomyces avermitilis.</title>
        <authorList>
            <person name="Ikeda H."/>
            <person name="Ishikawa J."/>
            <person name="Hanamoto A."/>
            <person name="Shinose M."/>
            <person name="Kikuchi H."/>
            <person name="Shiba T."/>
            <person name="Sakaki Y."/>
            <person name="Hattori M."/>
            <person name="Omura S."/>
        </authorList>
    </citation>
    <scope>NUCLEOTIDE SEQUENCE [LARGE SCALE GENOMIC DNA]</scope>
    <source>
        <strain>ATCC 31267 / DSM 46492 / JCM 5070 / NBRC 14893 / NCIMB 12804 / NRRL 8165 / MA-4680</strain>
    </source>
</reference>
<reference key="3">
    <citation type="journal article" date="2013" name="Biochemistry">
        <title>Deamination of 6-aminodeoxyfutalosine in menaquinone biosynthesis by distantly related enzymes.</title>
        <authorList>
            <person name="Goble A.M."/>
            <person name="Toro R."/>
            <person name="Li X."/>
            <person name="Ornelas A."/>
            <person name="Fan H."/>
            <person name="Eswaramoorthy S."/>
            <person name="Patskovsky Y."/>
            <person name="Hillerich B."/>
            <person name="Seidel R."/>
            <person name="Sali A."/>
            <person name="Shoichet B.K."/>
            <person name="Almo S.C."/>
            <person name="Swaminathan S."/>
            <person name="Tanner M.E."/>
            <person name="Raushel F.M."/>
        </authorList>
    </citation>
    <scope>FUNCTION</scope>
    <scope>CATALYTIC ACTIVITY</scope>
    <scope>SUBSTRATE SPECIFICITY</scope>
    <scope>KINETIC PARAMETERS</scope>
    <scope>MUTAGENESIS OF ARG-87</scope>
    <scope>3D-STRUCTURE MODELING IN COMPLEX WITH AFL</scope>
    <source>
        <strain>ATCC 31267 / DSM 46492 / JCM 5070 / NBRC 14893 / NCIMB 12804 / NRRL 8165 / MA-4680</strain>
    </source>
</reference>
<organism>
    <name type="scientific">Streptomyces avermitilis (strain ATCC 31267 / DSM 46492 / JCM 5070 / NBRC 14893 / NCIMB 12804 / NRRL 8165 / MA-4680)</name>
    <dbReference type="NCBI Taxonomy" id="227882"/>
    <lineage>
        <taxon>Bacteria</taxon>
        <taxon>Bacillati</taxon>
        <taxon>Actinomycetota</taxon>
        <taxon>Actinomycetes</taxon>
        <taxon>Kitasatosporales</taxon>
        <taxon>Streptomycetaceae</taxon>
        <taxon>Streptomyces</taxon>
    </lineage>
</organism>
<comment type="function">
    <text evidence="3">Catalyzes the deamination of aminodeoxyfutalosine (AFL) into futalosine (FL), a step in the biosynthesis of menaquinone (MK, vitamin K2). To a lesser extent, can also deaminate adenosine, 5'-methylthioadenosine, 5'-deoxyadenosine, and 2'-deoxyadenosine.</text>
</comment>
<comment type="catalytic activity">
    <reaction evidence="3">
        <text>6-amino-6-deoxyfutalosine + H2O + H(+) = futalosine + NH4(+)</text>
        <dbReference type="Rhea" id="RHEA:40075"/>
        <dbReference type="ChEBI" id="CHEBI:15377"/>
        <dbReference type="ChEBI" id="CHEBI:15378"/>
        <dbReference type="ChEBI" id="CHEBI:28938"/>
        <dbReference type="ChEBI" id="CHEBI:58863"/>
        <dbReference type="ChEBI" id="CHEBI:64286"/>
        <dbReference type="EC" id="3.5.4.40"/>
    </reaction>
</comment>
<comment type="cofactor">
    <cofactor evidence="1">
        <name>Zn(2+)</name>
        <dbReference type="ChEBI" id="CHEBI:29105"/>
    </cofactor>
    <text evidence="1">Binds 1 zinc ion per subunit.</text>
</comment>
<comment type="biophysicochemical properties">
    <kinetics>
        <KM evidence="3">4.8 uM for aminodeoxyfutalosine</KM>
        <KM evidence="3">94 uM for 5'-methylthioadenosine</KM>
        <text>kcat is 3.8 sec(-1) with aminodeoxyfutalosine as substrate. kcat is 0.40 sec(-1) with 5'-methylthioadenosine as substrate.</text>
    </kinetics>
</comment>
<comment type="pathway">
    <text>Quinol/quinone metabolism; menaquinone biosynthesis.</text>
</comment>
<comment type="similarity">
    <text evidence="4">Belongs to the metallo-dependent hydrolases superfamily. Adenosine and AMP deaminases family.</text>
</comment>
<accession>Q82K09</accession>
<keyword id="KW-0378">Hydrolase</keyword>
<keyword id="KW-0474">Menaquinone biosynthesis</keyword>
<keyword id="KW-0479">Metal-binding</keyword>
<keyword id="KW-1185">Reference proteome</keyword>
<keyword id="KW-0862">Zinc</keyword>
<evidence type="ECO:0000250" key="1"/>
<evidence type="ECO:0000255" key="2"/>
<evidence type="ECO:0000269" key="3">
    <source>
    </source>
</evidence>
<evidence type="ECO:0000305" key="4"/>
<feature type="chain" id="PRO_0000425133" description="Aminodeoxyfutalosine deaminase">
    <location>
        <begin position="1"/>
        <end position="358"/>
    </location>
</feature>
<feature type="active site" description="Proton donor" evidence="1">
    <location>
        <position position="218"/>
    </location>
</feature>
<feature type="binding site" evidence="4">
    <location>
        <position position="32"/>
    </location>
    <ligand>
        <name>Zn(2+)</name>
        <dbReference type="ChEBI" id="CHEBI:29105"/>
        <note>catalytic</note>
    </ligand>
</feature>
<feature type="binding site" evidence="4">
    <location>
        <position position="34"/>
    </location>
    <ligand>
        <name>Zn(2+)</name>
        <dbReference type="ChEBI" id="CHEBI:29105"/>
        <note>catalytic</note>
    </ligand>
</feature>
<feature type="binding site" evidence="4">
    <location>
        <position position="87"/>
    </location>
    <ligand>
        <name>substrate</name>
    </ligand>
</feature>
<feature type="binding site" evidence="2">
    <location>
        <position position="154"/>
    </location>
    <ligand>
        <name>substrate</name>
    </ligand>
</feature>
<feature type="binding site" evidence="4">
    <location>
        <position position="188"/>
    </location>
    <ligand>
        <name>substrate</name>
    </ligand>
</feature>
<feature type="binding site" evidence="4">
    <location>
        <position position="215"/>
    </location>
    <ligand>
        <name>Zn(2+)</name>
        <dbReference type="ChEBI" id="CHEBI:29105"/>
        <note>catalytic</note>
    </ligand>
</feature>
<feature type="binding site" evidence="4">
    <location>
        <position position="296"/>
    </location>
    <ligand>
        <name>Zn(2+)</name>
        <dbReference type="ChEBI" id="CHEBI:29105"/>
        <note>catalytic</note>
    </ligand>
</feature>
<feature type="mutagenesis site" description="30-fold reduction in catalytic efficiency with AFL as substrate, but nearly no effect on catalytic efficiency with adenosine as substrate." evidence="3">
    <original>R</original>
    <variation>A</variation>
    <location>
        <position position="87"/>
    </location>
</feature>
<feature type="mutagenesis site" description="15-fold reduction in catalytic efficiency with AFL as substrate, but nearly no effect on catalytic efficiency with adenosine as substrate." evidence="3">
    <original>R</original>
    <variation>M</variation>
    <location>
        <position position="87"/>
    </location>
</feature>
<gene>
    <name type="primary">add2</name>
    <name type="ordered locus">SAV_2595</name>
</gene>